<name>THIO1_SYNE7</name>
<protein>
    <recommendedName>
        <fullName>Thioredoxin 1</fullName>
        <shortName>Trx-1</shortName>
    </recommendedName>
    <alternativeName>
        <fullName evidence="2">Thioredoxin-M</fullName>
    </alternativeName>
</protein>
<proteinExistence type="inferred from homology"/>
<keyword id="KW-1015">Disulfide bond</keyword>
<keyword id="KW-0249">Electron transport</keyword>
<keyword id="KW-0676">Redox-active center</keyword>
<keyword id="KW-1185">Reference proteome</keyword>
<keyword id="KW-0813">Transport</keyword>
<comment type="function">
    <text>Participates in various redox reactions through the reversible oxidation of its active center dithiol to a disulfide and catalyzes dithiol-disulfide exchange reactions.</text>
</comment>
<comment type="similarity">
    <text evidence="3">Belongs to the thioredoxin family.</text>
</comment>
<feature type="chain" id="PRO_0000120137" description="Thioredoxin 1">
    <location>
        <begin position="1"/>
        <end position="107"/>
    </location>
</feature>
<feature type="domain" description="Thioredoxin" evidence="1">
    <location>
        <begin position="2"/>
        <end position="107"/>
    </location>
</feature>
<feature type="disulfide bond" description="Redox-active" evidence="1">
    <location>
        <begin position="32"/>
        <end position="35"/>
    </location>
</feature>
<dbReference type="EMBL" id="J04475">
    <property type="protein sequence ID" value="AAA22057.1"/>
    <property type="molecule type" value="Genomic_DNA"/>
</dbReference>
<dbReference type="EMBL" id="AY157498">
    <property type="protein sequence ID" value="AAN46173.1"/>
    <property type="molecule type" value="Genomic_DNA"/>
</dbReference>
<dbReference type="EMBL" id="CP000100">
    <property type="protein sequence ID" value="ABB57860.1"/>
    <property type="molecule type" value="Genomic_DNA"/>
</dbReference>
<dbReference type="RefSeq" id="WP_011244574.1">
    <property type="nucleotide sequence ID" value="NZ_JACJTX010000001.1"/>
</dbReference>
<dbReference type="SMR" id="P12243"/>
<dbReference type="STRING" id="1140.Synpcc7942_1830"/>
<dbReference type="PaxDb" id="1140-Synpcc7942_1830"/>
<dbReference type="GeneID" id="72430701"/>
<dbReference type="KEGG" id="syf:Synpcc7942_1830"/>
<dbReference type="eggNOG" id="COG3118">
    <property type="taxonomic scope" value="Bacteria"/>
</dbReference>
<dbReference type="HOGENOM" id="CLU_090389_10_2_3"/>
<dbReference type="OrthoDB" id="530955at2"/>
<dbReference type="BioCyc" id="SYNEL:SYNPCC7942_1830-MONOMER"/>
<dbReference type="Proteomes" id="UP000889800">
    <property type="component" value="Chromosome"/>
</dbReference>
<dbReference type="GO" id="GO:0005737">
    <property type="term" value="C:cytoplasm"/>
    <property type="evidence" value="ECO:0007669"/>
    <property type="project" value="TreeGrafter"/>
</dbReference>
<dbReference type="GO" id="GO:0015035">
    <property type="term" value="F:protein-disulfide reductase activity"/>
    <property type="evidence" value="ECO:0007669"/>
    <property type="project" value="InterPro"/>
</dbReference>
<dbReference type="CDD" id="cd02947">
    <property type="entry name" value="TRX_family"/>
    <property type="match status" value="1"/>
</dbReference>
<dbReference type="FunFam" id="3.40.30.10:FF:000001">
    <property type="entry name" value="Thioredoxin"/>
    <property type="match status" value="1"/>
</dbReference>
<dbReference type="Gene3D" id="3.40.30.10">
    <property type="entry name" value="Glutaredoxin"/>
    <property type="match status" value="1"/>
</dbReference>
<dbReference type="InterPro" id="IPR005746">
    <property type="entry name" value="Thioredoxin"/>
</dbReference>
<dbReference type="InterPro" id="IPR036249">
    <property type="entry name" value="Thioredoxin-like_sf"/>
</dbReference>
<dbReference type="InterPro" id="IPR017937">
    <property type="entry name" value="Thioredoxin_CS"/>
</dbReference>
<dbReference type="InterPro" id="IPR013766">
    <property type="entry name" value="Thioredoxin_domain"/>
</dbReference>
<dbReference type="NCBIfam" id="NF008229">
    <property type="entry name" value="PRK10996.1"/>
    <property type="match status" value="1"/>
</dbReference>
<dbReference type="NCBIfam" id="TIGR01068">
    <property type="entry name" value="thioredoxin"/>
    <property type="match status" value="1"/>
</dbReference>
<dbReference type="PANTHER" id="PTHR45663">
    <property type="entry name" value="GEO12009P1"/>
    <property type="match status" value="1"/>
</dbReference>
<dbReference type="PANTHER" id="PTHR45663:SF11">
    <property type="entry name" value="GEO12009P1"/>
    <property type="match status" value="1"/>
</dbReference>
<dbReference type="Pfam" id="PF00085">
    <property type="entry name" value="Thioredoxin"/>
    <property type="match status" value="1"/>
</dbReference>
<dbReference type="PIRSF" id="PIRSF000077">
    <property type="entry name" value="Thioredoxin"/>
    <property type="match status" value="1"/>
</dbReference>
<dbReference type="PRINTS" id="PR00421">
    <property type="entry name" value="THIOREDOXIN"/>
</dbReference>
<dbReference type="SUPFAM" id="SSF52833">
    <property type="entry name" value="Thioredoxin-like"/>
    <property type="match status" value="1"/>
</dbReference>
<dbReference type="PROSITE" id="PS00194">
    <property type="entry name" value="THIOREDOXIN_1"/>
    <property type="match status" value="1"/>
</dbReference>
<dbReference type="PROSITE" id="PS51352">
    <property type="entry name" value="THIOREDOXIN_2"/>
    <property type="match status" value="1"/>
</dbReference>
<gene>
    <name type="primary">trxA</name>
    <name evidence="2" type="synonym">trxM</name>
    <name type="ordered locus">Synpcc7942_1830</name>
</gene>
<organism>
    <name type="scientific">Synechococcus elongatus (strain ATCC 33912 / PCC 7942 / FACHB-805)</name>
    <name type="common">Anacystis nidulans R2</name>
    <dbReference type="NCBI Taxonomy" id="1140"/>
    <lineage>
        <taxon>Bacteria</taxon>
        <taxon>Bacillati</taxon>
        <taxon>Cyanobacteriota</taxon>
        <taxon>Cyanophyceae</taxon>
        <taxon>Synechococcales</taxon>
        <taxon>Synechococcaceae</taxon>
        <taxon>Synechococcus</taxon>
    </lineage>
</organism>
<reference key="1">
    <citation type="journal article" date="1989" name="J. Biol. Chem.">
        <title>Thioredoxin is essential for photosynthetic growth. The thioredoxin m gene of Anacystis nidulans.</title>
        <authorList>
            <person name="Muller E.G.D."/>
            <person name="Buchanan B.B."/>
        </authorList>
    </citation>
    <scope>NUCLEOTIDE SEQUENCE [GENOMIC DNA]</scope>
</reference>
<reference key="2">
    <citation type="submission" date="2002-10" db="EMBL/GenBank/DDBJ databases">
        <title>Synechococcus elongatus PCC7942 cosmid 4G8.</title>
        <authorList>
            <person name="Holtman C.K."/>
            <person name="Sandoval P."/>
            <person name="Chen Y."/>
            <person name="Socias T."/>
            <person name="McMurtry S."/>
            <person name="Gonzalez A."/>
            <person name="Salinas I."/>
            <person name="Golden S.S."/>
            <person name="Youderian P."/>
        </authorList>
    </citation>
    <scope>NUCLEOTIDE SEQUENCE [GENOMIC DNA]</scope>
</reference>
<reference key="3">
    <citation type="submission" date="2005-08" db="EMBL/GenBank/DDBJ databases">
        <title>Complete sequence of chromosome 1 of Synechococcus elongatus PCC 7942.</title>
        <authorList>
            <consortium name="US DOE Joint Genome Institute"/>
            <person name="Copeland A."/>
            <person name="Lucas S."/>
            <person name="Lapidus A."/>
            <person name="Barry K."/>
            <person name="Detter J.C."/>
            <person name="Glavina T."/>
            <person name="Hammon N."/>
            <person name="Israni S."/>
            <person name="Pitluck S."/>
            <person name="Schmutz J."/>
            <person name="Larimer F."/>
            <person name="Land M."/>
            <person name="Kyrpides N."/>
            <person name="Lykidis A."/>
            <person name="Golden S."/>
            <person name="Richardson P."/>
        </authorList>
    </citation>
    <scope>NUCLEOTIDE SEQUENCE [LARGE SCALE GENOMIC DNA]</scope>
    <source>
        <strain>ATCC 33912 / PCC 7942 / FACHB-805</strain>
    </source>
</reference>
<accession>P12243</accession>
<accession>Q79N44</accession>
<evidence type="ECO:0000255" key="1">
    <source>
        <dbReference type="PROSITE-ProRule" id="PRU00691"/>
    </source>
</evidence>
<evidence type="ECO:0000303" key="2">
    <source>
    </source>
</evidence>
<evidence type="ECO:0000305" key="3"/>
<sequence>MSVAAAVTDATFKQEVLESSIPVLVDFWAPWCGPCRMVAPVVDEIAQQYSDQVKVVKVNTDENPSVASQYGIRSIPTLMIFKDGQRVDTVVGAVPKTTLANTLDKHL</sequence>